<keyword id="KW-0025">Alternative splicing</keyword>
<keyword id="KW-0963">Cytoplasm</keyword>
<keyword id="KW-0206">Cytoskeleton</keyword>
<keyword id="KW-0967">Endosome</keyword>
<keyword id="KW-0458">Lysosome</keyword>
<keyword id="KW-0472">Membrane</keyword>
<keyword id="KW-0539">Nucleus</keyword>
<keyword id="KW-0597">Phosphoprotein</keyword>
<keyword id="KW-1185">Reference proteome</keyword>
<keyword id="KW-0833">Ubl conjugation pathway</keyword>
<comment type="function">
    <text evidence="1">May negatively regulate the ATPase activity of VCP, an ATP-driven segregase that associates with different cofactors to control a wide variety of cellular processes. As a cofactor of VCP, it may play a role in the transport of CAV1 to lysosomes for degradation. It may also play a role in endoplasmic reticulum-associated degradation (ERAD) of misfolded proteins. Together with VCP and other cofactors, it may play a role in macroautophagy, regulating for instance the clearance of damaged lysosomes.</text>
</comment>
<comment type="subunit">
    <text evidence="1">Interacts with VCP through the PUB domain (via C-terminus) and VIM motif (via N-terminus); the interaction is direct. Forms a ternary complex with CAV1 and VCP. Interacts with SYVN1. Interacts with HERPUD1. Interacts with VCPKMT. May interact with DERL1. Interacts with PLAA, VCP and YOD1; may form a complex involved in macroautophagy. Interacts with LMAN1.</text>
</comment>
<comment type="subcellular location">
    <subcellularLocation>
        <location evidence="1">Cytoplasm</location>
    </subcellularLocation>
    <subcellularLocation>
        <location evidence="1">Cytoplasm</location>
        <location evidence="1">Cytosol</location>
    </subcellularLocation>
    <subcellularLocation>
        <location evidence="1">Membrane</location>
        <topology evidence="1">Peripheral membrane protein</topology>
    </subcellularLocation>
    <subcellularLocation>
        <location evidence="1">Nucleus</location>
    </subcellularLocation>
    <subcellularLocation>
        <location evidence="1">Cytoplasm</location>
        <location evidence="1">Cytoskeleton</location>
        <location evidence="1">Microtubule organizing center</location>
        <location evidence="1">Centrosome</location>
    </subcellularLocation>
    <subcellularLocation>
        <location evidence="1">Early endosome membrane</location>
        <topology evidence="1">Peripheral membrane protein</topology>
    </subcellularLocation>
    <subcellularLocation>
        <location evidence="1">Late endosome membrane</location>
        <topology evidence="1">Peripheral membrane protein</topology>
    </subcellularLocation>
    <subcellularLocation>
        <location evidence="1">Lysosome membrane</location>
        <topology evidence="1">Peripheral membrane protein</topology>
    </subcellularLocation>
    <text evidence="1">Localizes at the centrosome both in interphase and during mitosis. May be recruited to endosomal and lysosomal membranes as part of a ternary complex with CAV1 and VCP. Recruited to damaged lysosomes decorated with K48-linked ubiquitin chains.</text>
</comment>
<comment type="alternative products">
    <event type="alternative splicing"/>
    <isoform>
        <id>Q99PL6-1</id>
        <name>1</name>
        <sequence type="displayed"/>
    </isoform>
    <isoform>
        <id>Q99PL6-2</id>
        <name>2</name>
        <sequence type="described" ref="VSP_007454"/>
    </isoform>
</comment>
<comment type="tissue specificity">
    <text evidence="5">Widely expressed (at protein level). Highest expression in brain (at protein level).</text>
</comment>
<comment type="domain">
    <text evidence="1">The UBX domain lacks key residues critical for VCP binding.</text>
</comment>
<comment type="sequence caution" evidence="8">
    <conflict type="frameshift">
        <sequence resource="EMBL-CDS" id="BAB26082"/>
    </conflict>
</comment>
<comment type="sequence caution" evidence="8">
    <conflict type="frameshift">
        <sequence resource="EMBL-CDS" id="BAC38512"/>
    </conflict>
</comment>
<comment type="sequence caution" evidence="8">
    <conflict type="frameshift">
        <sequence resource="EMBL-CDS" id="BAE36284"/>
    </conflict>
</comment>
<proteinExistence type="evidence at protein level"/>
<gene>
    <name evidence="9" type="primary">Ubxn6</name>
    <name evidence="6" type="synonym">Ubxd1</name>
    <name type="synonym">Ubxdc2</name>
</gene>
<reference key="1">
    <citation type="journal article" date="2001" name="Biochim. Biophys. Acta">
        <title>Identification and characterization of UBXD1, a novel UBX domain-containing gene on human chromosome 19p13, and its mouse ortholog.</title>
        <authorList>
            <person name="Carim-Todd L."/>
            <person name="Escarceller M."/>
            <person name="Estivill X."/>
            <person name="Sumoy L."/>
        </authorList>
    </citation>
    <scope>NUCLEOTIDE SEQUENCE [MRNA] (ISOFORM 1)</scope>
</reference>
<reference key="2">
    <citation type="journal article" date="2005" name="Science">
        <title>The transcriptional landscape of the mammalian genome.</title>
        <authorList>
            <person name="Carninci P."/>
            <person name="Kasukawa T."/>
            <person name="Katayama S."/>
            <person name="Gough J."/>
            <person name="Frith M.C."/>
            <person name="Maeda N."/>
            <person name="Oyama R."/>
            <person name="Ravasi T."/>
            <person name="Lenhard B."/>
            <person name="Wells C."/>
            <person name="Kodzius R."/>
            <person name="Shimokawa K."/>
            <person name="Bajic V.B."/>
            <person name="Brenner S.E."/>
            <person name="Batalov S."/>
            <person name="Forrest A.R."/>
            <person name="Zavolan M."/>
            <person name="Davis M.J."/>
            <person name="Wilming L.G."/>
            <person name="Aidinis V."/>
            <person name="Allen J.E."/>
            <person name="Ambesi-Impiombato A."/>
            <person name="Apweiler R."/>
            <person name="Aturaliya R.N."/>
            <person name="Bailey T.L."/>
            <person name="Bansal M."/>
            <person name="Baxter L."/>
            <person name="Beisel K.W."/>
            <person name="Bersano T."/>
            <person name="Bono H."/>
            <person name="Chalk A.M."/>
            <person name="Chiu K.P."/>
            <person name="Choudhary V."/>
            <person name="Christoffels A."/>
            <person name="Clutterbuck D.R."/>
            <person name="Crowe M.L."/>
            <person name="Dalla E."/>
            <person name="Dalrymple B.P."/>
            <person name="de Bono B."/>
            <person name="Della Gatta G."/>
            <person name="di Bernardo D."/>
            <person name="Down T."/>
            <person name="Engstrom P."/>
            <person name="Fagiolini M."/>
            <person name="Faulkner G."/>
            <person name="Fletcher C.F."/>
            <person name="Fukushima T."/>
            <person name="Furuno M."/>
            <person name="Futaki S."/>
            <person name="Gariboldi M."/>
            <person name="Georgii-Hemming P."/>
            <person name="Gingeras T.R."/>
            <person name="Gojobori T."/>
            <person name="Green R.E."/>
            <person name="Gustincich S."/>
            <person name="Harbers M."/>
            <person name="Hayashi Y."/>
            <person name="Hensch T.K."/>
            <person name="Hirokawa N."/>
            <person name="Hill D."/>
            <person name="Huminiecki L."/>
            <person name="Iacono M."/>
            <person name="Ikeo K."/>
            <person name="Iwama A."/>
            <person name="Ishikawa T."/>
            <person name="Jakt M."/>
            <person name="Kanapin A."/>
            <person name="Katoh M."/>
            <person name="Kawasawa Y."/>
            <person name="Kelso J."/>
            <person name="Kitamura H."/>
            <person name="Kitano H."/>
            <person name="Kollias G."/>
            <person name="Krishnan S.P."/>
            <person name="Kruger A."/>
            <person name="Kummerfeld S.K."/>
            <person name="Kurochkin I.V."/>
            <person name="Lareau L.F."/>
            <person name="Lazarevic D."/>
            <person name="Lipovich L."/>
            <person name="Liu J."/>
            <person name="Liuni S."/>
            <person name="McWilliam S."/>
            <person name="Madan Babu M."/>
            <person name="Madera M."/>
            <person name="Marchionni L."/>
            <person name="Matsuda H."/>
            <person name="Matsuzawa S."/>
            <person name="Miki H."/>
            <person name="Mignone F."/>
            <person name="Miyake S."/>
            <person name="Morris K."/>
            <person name="Mottagui-Tabar S."/>
            <person name="Mulder N."/>
            <person name="Nakano N."/>
            <person name="Nakauchi H."/>
            <person name="Ng P."/>
            <person name="Nilsson R."/>
            <person name="Nishiguchi S."/>
            <person name="Nishikawa S."/>
            <person name="Nori F."/>
            <person name="Ohara O."/>
            <person name="Okazaki Y."/>
            <person name="Orlando V."/>
            <person name="Pang K.C."/>
            <person name="Pavan W.J."/>
            <person name="Pavesi G."/>
            <person name="Pesole G."/>
            <person name="Petrovsky N."/>
            <person name="Piazza S."/>
            <person name="Reed J."/>
            <person name="Reid J.F."/>
            <person name="Ring B.Z."/>
            <person name="Ringwald M."/>
            <person name="Rost B."/>
            <person name="Ruan Y."/>
            <person name="Salzberg S.L."/>
            <person name="Sandelin A."/>
            <person name="Schneider C."/>
            <person name="Schoenbach C."/>
            <person name="Sekiguchi K."/>
            <person name="Semple C.A."/>
            <person name="Seno S."/>
            <person name="Sessa L."/>
            <person name="Sheng Y."/>
            <person name="Shibata Y."/>
            <person name="Shimada H."/>
            <person name="Shimada K."/>
            <person name="Silva D."/>
            <person name="Sinclair B."/>
            <person name="Sperling S."/>
            <person name="Stupka E."/>
            <person name="Sugiura K."/>
            <person name="Sultana R."/>
            <person name="Takenaka Y."/>
            <person name="Taki K."/>
            <person name="Tammoja K."/>
            <person name="Tan S.L."/>
            <person name="Tang S."/>
            <person name="Taylor M.S."/>
            <person name="Tegner J."/>
            <person name="Teichmann S.A."/>
            <person name="Ueda H.R."/>
            <person name="van Nimwegen E."/>
            <person name="Verardo R."/>
            <person name="Wei C.L."/>
            <person name="Yagi K."/>
            <person name="Yamanishi H."/>
            <person name="Zabarovsky E."/>
            <person name="Zhu S."/>
            <person name="Zimmer A."/>
            <person name="Hide W."/>
            <person name="Bult C."/>
            <person name="Grimmond S.M."/>
            <person name="Teasdale R.D."/>
            <person name="Liu E.T."/>
            <person name="Brusic V."/>
            <person name="Quackenbush J."/>
            <person name="Wahlestedt C."/>
            <person name="Mattick J.S."/>
            <person name="Hume D.A."/>
            <person name="Kai C."/>
            <person name="Sasaki D."/>
            <person name="Tomaru Y."/>
            <person name="Fukuda S."/>
            <person name="Kanamori-Katayama M."/>
            <person name="Suzuki M."/>
            <person name="Aoki J."/>
            <person name="Arakawa T."/>
            <person name="Iida J."/>
            <person name="Imamura K."/>
            <person name="Itoh M."/>
            <person name="Kato T."/>
            <person name="Kawaji H."/>
            <person name="Kawagashira N."/>
            <person name="Kawashima T."/>
            <person name="Kojima M."/>
            <person name="Kondo S."/>
            <person name="Konno H."/>
            <person name="Nakano K."/>
            <person name="Ninomiya N."/>
            <person name="Nishio T."/>
            <person name="Okada M."/>
            <person name="Plessy C."/>
            <person name="Shibata K."/>
            <person name="Shiraki T."/>
            <person name="Suzuki S."/>
            <person name="Tagami M."/>
            <person name="Waki K."/>
            <person name="Watahiki A."/>
            <person name="Okamura-Oho Y."/>
            <person name="Suzuki H."/>
            <person name="Kawai J."/>
            <person name="Hayashizaki Y."/>
        </authorList>
    </citation>
    <scope>NUCLEOTIDE SEQUENCE [LARGE SCALE MRNA] (ISOFORM 1)</scope>
    <source>
        <strain>C57BL/6J</strain>
        <tissue>Cerebellum</tissue>
        <tissue>Testis</tissue>
        <tissue>Tongue</tissue>
    </source>
</reference>
<reference key="3">
    <citation type="submission" date="2005-07" db="EMBL/GenBank/DDBJ databases">
        <authorList>
            <person name="Mural R.J."/>
            <person name="Adams M.D."/>
            <person name="Myers E.W."/>
            <person name="Smith H.O."/>
            <person name="Venter J.C."/>
        </authorList>
    </citation>
    <scope>NUCLEOTIDE SEQUENCE [LARGE SCALE GENOMIC DNA]</scope>
</reference>
<reference key="4">
    <citation type="journal article" date="2009" name="PLoS Biol.">
        <title>Lineage-specific biology revealed by a finished genome assembly of the mouse.</title>
        <authorList>
            <person name="Church D.M."/>
            <person name="Goodstadt L."/>
            <person name="Hillier L.W."/>
            <person name="Zody M.C."/>
            <person name="Goldstein S."/>
            <person name="She X."/>
            <person name="Bult C.J."/>
            <person name="Agarwala R."/>
            <person name="Cherry J.L."/>
            <person name="DiCuccio M."/>
            <person name="Hlavina W."/>
            <person name="Kapustin Y."/>
            <person name="Meric P."/>
            <person name="Maglott D."/>
            <person name="Birtle Z."/>
            <person name="Marques A.C."/>
            <person name="Graves T."/>
            <person name="Zhou S."/>
            <person name="Teague B."/>
            <person name="Potamousis K."/>
            <person name="Churas C."/>
            <person name="Place M."/>
            <person name="Herschleb J."/>
            <person name="Runnheim R."/>
            <person name="Forrest D."/>
            <person name="Amos-Landgraf J."/>
            <person name="Schwartz D.C."/>
            <person name="Cheng Z."/>
            <person name="Lindblad-Toh K."/>
            <person name="Eichler E.E."/>
            <person name="Ponting C.P."/>
        </authorList>
    </citation>
    <scope>NUCLEOTIDE SEQUENCE [LARGE SCALE GENOMIC DNA]</scope>
    <source>
        <strain>C57BL/6J</strain>
    </source>
</reference>
<reference key="5">
    <citation type="journal article" date="2004" name="Genome Res.">
        <title>The status, quality, and expansion of the NIH full-length cDNA project: the Mammalian Gene Collection (MGC).</title>
        <authorList>
            <consortium name="The MGC Project Team"/>
        </authorList>
    </citation>
    <scope>NUCLEOTIDE SEQUENCE [LARGE SCALE MRNA] (ISOFORMS 1 AND 2)</scope>
    <source>
        <tissue>Colon</tissue>
        <tissue>Mammary gland</tissue>
    </source>
</reference>
<reference key="6">
    <citation type="journal article" date="2008" name="Int. J. Biochem. Cell Biol.">
        <title>Ubxd1 is a novel co-factor of the human p97 ATPase.</title>
        <authorList>
            <person name="Madsen L."/>
            <person name="Andersen K.M."/>
            <person name="Prag S."/>
            <person name="Moos T."/>
            <person name="Semple C.A."/>
            <person name="Seeger M."/>
            <person name="Hartmann-Petersen R."/>
        </authorList>
    </citation>
    <scope>TISSUE SPECIFICITY</scope>
</reference>
<reference key="7">
    <citation type="journal article" date="2010" name="Cell">
        <title>A tissue-specific atlas of mouse protein phosphorylation and expression.</title>
        <authorList>
            <person name="Huttlin E.L."/>
            <person name="Jedrychowski M.P."/>
            <person name="Elias J.E."/>
            <person name="Goswami T."/>
            <person name="Rad R."/>
            <person name="Beausoleil S.A."/>
            <person name="Villen J."/>
            <person name="Haas W."/>
            <person name="Sowa M.E."/>
            <person name="Gygi S.P."/>
        </authorList>
    </citation>
    <scope>PHOSPHORYLATION [LARGE SCALE ANALYSIS] AT SER-36</scope>
    <scope>IDENTIFICATION BY MASS SPECTROMETRY [LARGE SCALE ANALYSIS]</scope>
    <source>
        <tissue>Brain</tissue>
        <tissue>Heart</tissue>
        <tissue>Lung</tissue>
        <tissue>Spleen</tissue>
        <tissue>Testis</tissue>
    </source>
</reference>
<feature type="chain" id="PRO_0000211026" description="UBX domain-containing protein 6">
    <location>
        <begin position="1"/>
        <end position="442"/>
    </location>
</feature>
<feature type="domain" description="PUB" evidence="2">
    <location>
        <begin position="175"/>
        <end position="244"/>
    </location>
</feature>
<feature type="domain" description="UBX" evidence="3">
    <location>
        <begin position="332"/>
        <end position="408"/>
    </location>
</feature>
<feature type="region of interest" description="Mediates interaction with LMAN1" evidence="1">
    <location>
        <begin position="1"/>
        <end position="10"/>
    </location>
</feature>
<feature type="region of interest" description="Disordered" evidence="4">
    <location>
        <begin position="13"/>
        <end position="111"/>
    </location>
</feature>
<feature type="region of interest" description="VCP/p97-interacting motif (VIM)" evidence="1">
    <location>
        <begin position="51"/>
        <end position="63"/>
    </location>
</feature>
<feature type="compositionally biased region" description="Low complexity" evidence="4">
    <location>
        <begin position="52"/>
        <end position="61"/>
    </location>
</feature>
<feature type="compositionally biased region" description="Polar residues" evidence="4">
    <location>
        <begin position="90"/>
        <end position="105"/>
    </location>
</feature>
<feature type="modified residue" description="Phosphoserine" evidence="10">
    <location>
        <position position="36"/>
    </location>
</feature>
<feature type="splice variant" id="VSP_007454" description="In isoform 2." evidence="7">
    <location>
        <begin position="1"/>
        <end position="53"/>
    </location>
</feature>
<feature type="sequence conflict" description="In Ref. 2; BAC38512." evidence="8" ref="2">
    <original>T</original>
    <variation>S</variation>
    <location>
        <position position="151"/>
    </location>
</feature>
<feature type="sequence conflict" description="In Ref. 2; BAB26082." evidence="8" ref="2">
    <original>L</original>
    <variation>V</variation>
    <location>
        <position position="400"/>
    </location>
</feature>
<sequence>MKKFFQEIKADIKFKSAGPGQKLTDSAGEKTTKGKSPQLALRQPRQGPTDEAQMAAAAALARLEQKQPRARGPTSQDSIRNQVRKELQAEATSSNNPGAPGTNSVPEPKEEISPHLAVPGVFFICPLTGVTLRRDQRDAHIKQAILSHFSTDPVAASIMKIHTFNRDRDRVKLGVDTIAKYLDNIHLHPEEEKYQKIKLQNKVFQERINCLEGSHEFFEAIGFKKVTLPVPDQEGQEEFYVLGEDARAQPQNLARHKQQLLDAEPVRATLDRQLRVFRPSALASHFELPSDFFSLTAEEVKREQRLRTEAVERLSSLRTKAMREKEEQRELRKYTYALVRVRLPDGCLLQGTFYAREKLSALFRFVREALQNDWLPFELRASGGQKLEENEALALNECGLVPSALLTFSWDASVLEDIRAAGAEPAKSVLRPELLAAIEQLS</sequence>
<dbReference type="EMBL" id="AF272895">
    <property type="protein sequence ID" value="AAK13259.1"/>
    <property type="molecule type" value="mRNA"/>
</dbReference>
<dbReference type="EMBL" id="AK009117">
    <property type="protein sequence ID" value="BAB26082.1"/>
    <property type="status" value="ALT_FRAME"/>
    <property type="molecule type" value="mRNA"/>
</dbReference>
<dbReference type="EMBL" id="AK082510">
    <property type="protein sequence ID" value="BAC38512.1"/>
    <property type="status" value="ALT_FRAME"/>
    <property type="molecule type" value="mRNA"/>
</dbReference>
<dbReference type="EMBL" id="AK148170">
    <property type="protein sequence ID" value="BAE28390.1"/>
    <property type="molecule type" value="mRNA"/>
</dbReference>
<dbReference type="EMBL" id="AK161273">
    <property type="protein sequence ID" value="BAE36284.1"/>
    <property type="status" value="ALT_FRAME"/>
    <property type="molecule type" value="mRNA"/>
</dbReference>
<dbReference type="EMBL" id="CH466559">
    <property type="protein sequence ID" value="EDL23709.1"/>
    <property type="molecule type" value="Genomic_DNA"/>
</dbReference>
<dbReference type="EMBL" id="CT009719">
    <property type="status" value="NOT_ANNOTATED_CDS"/>
    <property type="molecule type" value="Genomic_DNA"/>
</dbReference>
<dbReference type="EMBL" id="BC016412">
    <property type="protein sequence ID" value="AAH16412.1"/>
    <property type="molecule type" value="mRNA"/>
</dbReference>
<dbReference type="EMBL" id="BC049963">
    <property type="protein sequence ID" value="AAH49963.1"/>
    <property type="molecule type" value="mRNA"/>
</dbReference>
<dbReference type="CCDS" id="CCDS28893.1">
    <molecule id="Q99PL6-1"/>
</dbReference>
<dbReference type="RefSeq" id="NP_001366290.1">
    <molecule id="Q99PL6-1"/>
    <property type="nucleotide sequence ID" value="NM_001379361.1"/>
</dbReference>
<dbReference type="RefSeq" id="NP_001366291.1">
    <molecule id="Q99PL6-2"/>
    <property type="nucleotide sequence ID" value="NM_001379362.1"/>
</dbReference>
<dbReference type="RefSeq" id="NP_077752.1">
    <molecule id="Q99PL6-1"/>
    <property type="nucleotide sequence ID" value="NM_024432.3"/>
</dbReference>
<dbReference type="RefSeq" id="XP_006524859.1">
    <property type="nucleotide sequence ID" value="XM_006524796.2"/>
</dbReference>
<dbReference type="RefSeq" id="XP_017173099.1">
    <property type="nucleotide sequence ID" value="XM_017317610.1"/>
</dbReference>
<dbReference type="SMR" id="Q99PL6"/>
<dbReference type="BioGRID" id="211538">
    <property type="interactions" value="18"/>
</dbReference>
<dbReference type="FunCoup" id="Q99PL6">
    <property type="interactions" value="2477"/>
</dbReference>
<dbReference type="STRING" id="10090.ENSMUSP00000019722"/>
<dbReference type="iPTMnet" id="Q99PL6"/>
<dbReference type="PhosphoSitePlus" id="Q99PL6"/>
<dbReference type="SwissPalm" id="Q99PL6"/>
<dbReference type="jPOST" id="Q99PL6"/>
<dbReference type="PaxDb" id="10090-ENSMUSP00000019722"/>
<dbReference type="PeptideAtlas" id="Q99PL6"/>
<dbReference type="ProteomicsDB" id="298186">
    <molecule id="Q99PL6-1"/>
</dbReference>
<dbReference type="ProteomicsDB" id="298187">
    <molecule id="Q99PL6-2"/>
</dbReference>
<dbReference type="Pumba" id="Q99PL6"/>
<dbReference type="Antibodypedia" id="42425">
    <property type="antibodies" value="174 antibodies from 25 providers"/>
</dbReference>
<dbReference type="DNASU" id="66530"/>
<dbReference type="Ensembl" id="ENSMUST00000019722.12">
    <molecule id="Q99PL6-1"/>
    <property type="protein sequence ID" value="ENSMUSP00000019722.6"/>
    <property type="gene ID" value="ENSMUSG00000019578.12"/>
</dbReference>
<dbReference type="GeneID" id="66530"/>
<dbReference type="KEGG" id="mmu:66530"/>
<dbReference type="UCSC" id="uc008dat.2">
    <molecule id="Q99PL6-1"/>
    <property type="organism name" value="mouse"/>
</dbReference>
<dbReference type="AGR" id="MGI:1913780"/>
<dbReference type="CTD" id="80700"/>
<dbReference type="MGI" id="MGI:1913780">
    <property type="gene designation" value="Ubxn6"/>
</dbReference>
<dbReference type="VEuPathDB" id="HostDB:ENSMUSG00000019578"/>
<dbReference type="eggNOG" id="KOG2699">
    <property type="taxonomic scope" value="Eukaryota"/>
</dbReference>
<dbReference type="GeneTree" id="ENSGT00940000157273"/>
<dbReference type="HOGENOM" id="CLU_033280_0_0_1"/>
<dbReference type="InParanoid" id="Q99PL6"/>
<dbReference type="OMA" id="VFFRCPM"/>
<dbReference type="OrthoDB" id="49605at2759"/>
<dbReference type="PhylomeDB" id="Q99PL6"/>
<dbReference type="TreeFam" id="TF314617"/>
<dbReference type="BioGRID-ORCS" id="66530">
    <property type="hits" value="7 hits in 78 CRISPR screens"/>
</dbReference>
<dbReference type="ChiTaRS" id="Ubxn6">
    <property type="organism name" value="mouse"/>
</dbReference>
<dbReference type="PRO" id="PR:Q99PL6"/>
<dbReference type="Proteomes" id="UP000000589">
    <property type="component" value="Chromosome 17"/>
</dbReference>
<dbReference type="RNAct" id="Q99PL6">
    <property type="molecule type" value="protein"/>
</dbReference>
<dbReference type="Bgee" id="ENSMUSG00000019578">
    <property type="expression patterns" value="Expressed in superior surface of tongue and 262 other cell types or tissues"/>
</dbReference>
<dbReference type="ExpressionAtlas" id="Q99PL6">
    <property type="expression patterns" value="baseline and differential"/>
</dbReference>
<dbReference type="GO" id="GO:0005813">
    <property type="term" value="C:centrosome"/>
    <property type="evidence" value="ECO:0007669"/>
    <property type="project" value="UniProtKB-SubCell"/>
</dbReference>
<dbReference type="GO" id="GO:0005737">
    <property type="term" value="C:cytoplasm"/>
    <property type="evidence" value="ECO:0000250"/>
    <property type="project" value="UniProtKB"/>
</dbReference>
<dbReference type="GO" id="GO:0005829">
    <property type="term" value="C:cytosol"/>
    <property type="evidence" value="ECO:0000250"/>
    <property type="project" value="UniProtKB"/>
</dbReference>
<dbReference type="GO" id="GO:0031901">
    <property type="term" value="C:early endosome membrane"/>
    <property type="evidence" value="ECO:0000250"/>
    <property type="project" value="UniProtKB"/>
</dbReference>
<dbReference type="GO" id="GO:0031902">
    <property type="term" value="C:late endosome membrane"/>
    <property type="evidence" value="ECO:0000250"/>
    <property type="project" value="UniProtKB"/>
</dbReference>
<dbReference type="GO" id="GO:0005765">
    <property type="term" value="C:lysosomal membrane"/>
    <property type="evidence" value="ECO:0000250"/>
    <property type="project" value="UniProtKB"/>
</dbReference>
<dbReference type="GO" id="GO:0016020">
    <property type="term" value="C:membrane"/>
    <property type="evidence" value="ECO:0000250"/>
    <property type="project" value="UniProtKB"/>
</dbReference>
<dbReference type="GO" id="GO:0005634">
    <property type="term" value="C:nucleus"/>
    <property type="evidence" value="ECO:0007669"/>
    <property type="project" value="UniProtKB-SubCell"/>
</dbReference>
<dbReference type="GO" id="GO:0032991">
    <property type="term" value="C:protein-containing complex"/>
    <property type="evidence" value="ECO:0007669"/>
    <property type="project" value="Ensembl"/>
</dbReference>
<dbReference type="GO" id="GO:0051117">
    <property type="term" value="F:ATPase binding"/>
    <property type="evidence" value="ECO:0007669"/>
    <property type="project" value="Ensembl"/>
</dbReference>
<dbReference type="GO" id="GO:0032510">
    <property type="term" value="P:endosome to lysosome transport via multivesicular body sorting pathway"/>
    <property type="evidence" value="ECO:0000250"/>
    <property type="project" value="UniProtKB"/>
</dbReference>
<dbReference type="GO" id="GO:0036503">
    <property type="term" value="P:ERAD pathway"/>
    <property type="evidence" value="ECO:0000250"/>
    <property type="project" value="UniProtKB"/>
</dbReference>
<dbReference type="GO" id="GO:0016236">
    <property type="term" value="P:macroautophagy"/>
    <property type="evidence" value="ECO:0000250"/>
    <property type="project" value="UniProtKB"/>
</dbReference>
<dbReference type="CDD" id="cd10460">
    <property type="entry name" value="PUB_UBXD1"/>
    <property type="match status" value="1"/>
</dbReference>
<dbReference type="CDD" id="cd16119">
    <property type="entry name" value="UBX_UBXN6"/>
    <property type="match status" value="1"/>
</dbReference>
<dbReference type="FunFam" id="3.10.20.90:FF:000185">
    <property type="entry name" value="UBX domain-containing protein 6"/>
    <property type="match status" value="1"/>
</dbReference>
<dbReference type="Gene3D" id="1.20.58.2190">
    <property type="match status" value="1"/>
</dbReference>
<dbReference type="Gene3D" id="3.10.20.90">
    <property type="entry name" value="Phosphatidylinositol 3-kinase Catalytic Subunit, Chain A, domain 1"/>
    <property type="match status" value="1"/>
</dbReference>
<dbReference type="InterPro" id="IPR036339">
    <property type="entry name" value="PUB-like_dom_sf"/>
</dbReference>
<dbReference type="InterPro" id="IPR018997">
    <property type="entry name" value="PUB_domain"/>
</dbReference>
<dbReference type="InterPro" id="IPR029071">
    <property type="entry name" value="Ubiquitin-like_domsf"/>
</dbReference>
<dbReference type="InterPro" id="IPR001012">
    <property type="entry name" value="UBX_dom"/>
</dbReference>
<dbReference type="InterPro" id="IPR042774">
    <property type="entry name" value="UBXN6_PUB"/>
</dbReference>
<dbReference type="PANTHER" id="PTHR23153:SF38">
    <property type="entry name" value="UBX DOMAIN-CONTAINING PROTEIN 6"/>
    <property type="match status" value="1"/>
</dbReference>
<dbReference type="PANTHER" id="PTHR23153">
    <property type="entry name" value="UBX-RELATED"/>
    <property type="match status" value="1"/>
</dbReference>
<dbReference type="Pfam" id="PF09409">
    <property type="entry name" value="PUB"/>
    <property type="match status" value="1"/>
</dbReference>
<dbReference type="Pfam" id="PF00789">
    <property type="entry name" value="UBX"/>
    <property type="match status" value="1"/>
</dbReference>
<dbReference type="SMART" id="SM00580">
    <property type="entry name" value="PUG"/>
    <property type="match status" value="1"/>
</dbReference>
<dbReference type="SUPFAM" id="SSF143503">
    <property type="entry name" value="PUG domain-like"/>
    <property type="match status" value="1"/>
</dbReference>
<dbReference type="SUPFAM" id="SSF54236">
    <property type="entry name" value="Ubiquitin-like"/>
    <property type="match status" value="1"/>
</dbReference>
<dbReference type="PROSITE" id="PS50033">
    <property type="entry name" value="UBX"/>
    <property type="match status" value="1"/>
</dbReference>
<organism>
    <name type="scientific">Mus musculus</name>
    <name type="common">Mouse</name>
    <dbReference type="NCBI Taxonomy" id="10090"/>
    <lineage>
        <taxon>Eukaryota</taxon>
        <taxon>Metazoa</taxon>
        <taxon>Chordata</taxon>
        <taxon>Craniata</taxon>
        <taxon>Vertebrata</taxon>
        <taxon>Euteleostomi</taxon>
        <taxon>Mammalia</taxon>
        <taxon>Eutheria</taxon>
        <taxon>Euarchontoglires</taxon>
        <taxon>Glires</taxon>
        <taxon>Rodentia</taxon>
        <taxon>Myomorpha</taxon>
        <taxon>Muroidea</taxon>
        <taxon>Muridae</taxon>
        <taxon>Murinae</taxon>
        <taxon>Mus</taxon>
        <taxon>Mus</taxon>
    </lineage>
</organism>
<protein>
    <recommendedName>
        <fullName evidence="8">UBX domain-containing protein 6</fullName>
    </recommendedName>
    <alternativeName>
        <fullName evidence="6">UBX domain-containing protein 1</fullName>
    </alternativeName>
</protein>
<evidence type="ECO:0000250" key="1">
    <source>
        <dbReference type="UniProtKB" id="Q9BZV1"/>
    </source>
</evidence>
<evidence type="ECO:0000255" key="2"/>
<evidence type="ECO:0000255" key="3">
    <source>
        <dbReference type="PROSITE-ProRule" id="PRU00215"/>
    </source>
</evidence>
<evidence type="ECO:0000256" key="4">
    <source>
        <dbReference type="SAM" id="MobiDB-lite"/>
    </source>
</evidence>
<evidence type="ECO:0000269" key="5">
    <source>
    </source>
</evidence>
<evidence type="ECO:0000303" key="6">
    <source>
    </source>
</evidence>
<evidence type="ECO:0000303" key="7">
    <source>
    </source>
</evidence>
<evidence type="ECO:0000305" key="8"/>
<evidence type="ECO:0000312" key="9">
    <source>
        <dbReference type="MGI" id="MGI:1913780"/>
    </source>
</evidence>
<evidence type="ECO:0007744" key="10">
    <source>
    </source>
</evidence>
<accession>Q99PL6</accession>
<accession>B8JJA5</accession>
<accession>Q3TTP1</accession>
<accession>Q3UG19</accession>
<accession>Q8C4D6</accession>
<accession>Q91W79</accession>
<accession>Q9D7L9</accession>
<name>UBXN6_MOUSE</name>